<evidence type="ECO:0000255" key="1">
    <source>
        <dbReference type="HAMAP-Rule" id="MF_00052"/>
    </source>
</evidence>
<evidence type="ECO:0000255" key="2">
    <source>
        <dbReference type="PROSITE-ProRule" id="PRU01319"/>
    </source>
</evidence>
<dbReference type="EC" id="3.1.26.4" evidence="1"/>
<dbReference type="EMBL" id="AM999887">
    <property type="protein sequence ID" value="CAQ54978.1"/>
    <property type="molecule type" value="Genomic_DNA"/>
</dbReference>
<dbReference type="RefSeq" id="WP_007302272.1">
    <property type="nucleotide sequence ID" value="NC_010981.1"/>
</dbReference>
<dbReference type="SMR" id="B3CM59"/>
<dbReference type="KEGG" id="wpi:WP0870"/>
<dbReference type="eggNOG" id="COG0164">
    <property type="taxonomic scope" value="Bacteria"/>
</dbReference>
<dbReference type="HOGENOM" id="CLU_036532_3_2_5"/>
<dbReference type="Proteomes" id="UP000008814">
    <property type="component" value="Chromosome"/>
</dbReference>
<dbReference type="GO" id="GO:0005737">
    <property type="term" value="C:cytoplasm"/>
    <property type="evidence" value="ECO:0007669"/>
    <property type="project" value="UniProtKB-SubCell"/>
</dbReference>
<dbReference type="GO" id="GO:0032299">
    <property type="term" value="C:ribonuclease H2 complex"/>
    <property type="evidence" value="ECO:0007669"/>
    <property type="project" value="TreeGrafter"/>
</dbReference>
<dbReference type="GO" id="GO:0030145">
    <property type="term" value="F:manganese ion binding"/>
    <property type="evidence" value="ECO:0007669"/>
    <property type="project" value="UniProtKB-UniRule"/>
</dbReference>
<dbReference type="GO" id="GO:0003723">
    <property type="term" value="F:RNA binding"/>
    <property type="evidence" value="ECO:0007669"/>
    <property type="project" value="InterPro"/>
</dbReference>
<dbReference type="GO" id="GO:0004523">
    <property type="term" value="F:RNA-DNA hybrid ribonuclease activity"/>
    <property type="evidence" value="ECO:0007669"/>
    <property type="project" value="UniProtKB-UniRule"/>
</dbReference>
<dbReference type="GO" id="GO:0043137">
    <property type="term" value="P:DNA replication, removal of RNA primer"/>
    <property type="evidence" value="ECO:0007669"/>
    <property type="project" value="TreeGrafter"/>
</dbReference>
<dbReference type="GO" id="GO:0006298">
    <property type="term" value="P:mismatch repair"/>
    <property type="evidence" value="ECO:0007669"/>
    <property type="project" value="TreeGrafter"/>
</dbReference>
<dbReference type="CDD" id="cd07182">
    <property type="entry name" value="RNase_HII_bacteria_HII_like"/>
    <property type="match status" value="1"/>
</dbReference>
<dbReference type="FunFam" id="3.30.420.10:FF:000006">
    <property type="entry name" value="Ribonuclease HII"/>
    <property type="match status" value="1"/>
</dbReference>
<dbReference type="Gene3D" id="3.30.420.10">
    <property type="entry name" value="Ribonuclease H-like superfamily/Ribonuclease H"/>
    <property type="match status" value="1"/>
</dbReference>
<dbReference type="HAMAP" id="MF_00052_B">
    <property type="entry name" value="RNase_HII_B"/>
    <property type="match status" value="1"/>
</dbReference>
<dbReference type="InterPro" id="IPR022898">
    <property type="entry name" value="RNase_HII"/>
</dbReference>
<dbReference type="InterPro" id="IPR001352">
    <property type="entry name" value="RNase_HII/HIII"/>
</dbReference>
<dbReference type="InterPro" id="IPR024567">
    <property type="entry name" value="RNase_HII/HIII_dom"/>
</dbReference>
<dbReference type="InterPro" id="IPR012337">
    <property type="entry name" value="RNaseH-like_sf"/>
</dbReference>
<dbReference type="InterPro" id="IPR036397">
    <property type="entry name" value="RNaseH_sf"/>
</dbReference>
<dbReference type="NCBIfam" id="NF000594">
    <property type="entry name" value="PRK00015.1-1"/>
    <property type="match status" value="1"/>
</dbReference>
<dbReference type="NCBIfam" id="NF000595">
    <property type="entry name" value="PRK00015.1-3"/>
    <property type="match status" value="1"/>
</dbReference>
<dbReference type="PANTHER" id="PTHR10954">
    <property type="entry name" value="RIBONUCLEASE H2 SUBUNIT A"/>
    <property type="match status" value="1"/>
</dbReference>
<dbReference type="PANTHER" id="PTHR10954:SF18">
    <property type="entry name" value="RIBONUCLEASE HII"/>
    <property type="match status" value="1"/>
</dbReference>
<dbReference type="Pfam" id="PF01351">
    <property type="entry name" value="RNase_HII"/>
    <property type="match status" value="1"/>
</dbReference>
<dbReference type="SUPFAM" id="SSF53098">
    <property type="entry name" value="Ribonuclease H-like"/>
    <property type="match status" value="1"/>
</dbReference>
<dbReference type="PROSITE" id="PS51975">
    <property type="entry name" value="RNASE_H_2"/>
    <property type="match status" value="1"/>
</dbReference>
<feature type="chain" id="PRO_1000091666" description="Ribonuclease HII">
    <location>
        <begin position="1"/>
        <end position="197"/>
    </location>
</feature>
<feature type="domain" description="RNase H type-2" evidence="2">
    <location>
        <begin position="14"/>
        <end position="197"/>
    </location>
</feature>
<feature type="binding site" evidence="1">
    <location>
        <position position="20"/>
    </location>
    <ligand>
        <name>a divalent metal cation</name>
        <dbReference type="ChEBI" id="CHEBI:60240"/>
    </ligand>
</feature>
<feature type="binding site" evidence="1">
    <location>
        <position position="21"/>
    </location>
    <ligand>
        <name>a divalent metal cation</name>
        <dbReference type="ChEBI" id="CHEBI:60240"/>
    </ligand>
</feature>
<feature type="binding site" evidence="1">
    <location>
        <position position="112"/>
    </location>
    <ligand>
        <name>a divalent metal cation</name>
        <dbReference type="ChEBI" id="CHEBI:60240"/>
    </ligand>
</feature>
<reference key="1">
    <citation type="journal article" date="2008" name="Mol. Biol. Evol.">
        <title>Genome evolution of Wolbachia strain wPip from the Culex pipiens group.</title>
        <authorList>
            <person name="Klasson L."/>
            <person name="Walker T."/>
            <person name="Sebaihia M."/>
            <person name="Sanders M.J."/>
            <person name="Quail M.A."/>
            <person name="Lord A."/>
            <person name="Sanders S."/>
            <person name="Earl J."/>
            <person name="O'Neill S.L."/>
            <person name="Thomson N."/>
            <person name="Sinkins S.P."/>
            <person name="Parkhill J."/>
        </authorList>
    </citation>
    <scope>NUCLEOTIDE SEQUENCE [LARGE SCALE GENOMIC DNA]</scope>
    <source>
        <strain>wPip</strain>
    </source>
</reference>
<sequence length="197" mass="21784">MKYPDFSLENTLSGIIAGVDEVGRGPLAGPVISAAVIFTDRDTVIDGINDSKKLTPKCRQVLYEKITSVAKFGIGMASVEEINSYNILQATKLSMKRALANLNLELDYVLVDGNQPPEVKWQVKSIVNGDSLSISIAAASIVAKVTRDRLMEELHNKHPQYNWYKNKGYGTKEHLSAIGLHGITKHHRKNFAPIRIL</sequence>
<name>RNH2_WOLPP</name>
<gene>
    <name evidence="1" type="primary">rnhB</name>
    <name type="ordered locus">WP0870</name>
</gene>
<keyword id="KW-0963">Cytoplasm</keyword>
<keyword id="KW-0255">Endonuclease</keyword>
<keyword id="KW-0378">Hydrolase</keyword>
<keyword id="KW-0464">Manganese</keyword>
<keyword id="KW-0479">Metal-binding</keyword>
<keyword id="KW-0540">Nuclease</keyword>
<protein>
    <recommendedName>
        <fullName evidence="1">Ribonuclease HII</fullName>
        <shortName evidence="1">RNase HII</shortName>
        <ecNumber evidence="1">3.1.26.4</ecNumber>
    </recommendedName>
</protein>
<proteinExistence type="inferred from homology"/>
<organism>
    <name type="scientific">Wolbachia pipientis subsp. Culex pipiens (strain wPip)</name>
    <dbReference type="NCBI Taxonomy" id="570417"/>
    <lineage>
        <taxon>Bacteria</taxon>
        <taxon>Pseudomonadati</taxon>
        <taxon>Pseudomonadota</taxon>
        <taxon>Alphaproteobacteria</taxon>
        <taxon>Rickettsiales</taxon>
        <taxon>Anaplasmataceae</taxon>
        <taxon>Wolbachieae</taxon>
        <taxon>Wolbachia</taxon>
    </lineage>
</organism>
<accession>B3CM59</accession>
<comment type="function">
    <text evidence="1">Endonuclease that specifically degrades the RNA of RNA-DNA hybrids.</text>
</comment>
<comment type="catalytic activity">
    <reaction evidence="1">
        <text>Endonucleolytic cleavage to 5'-phosphomonoester.</text>
        <dbReference type="EC" id="3.1.26.4"/>
    </reaction>
</comment>
<comment type="cofactor">
    <cofactor evidence="1">
        <name>Mn(2+)</name>
        <dbReference type="ChEBI" id="CHEBI:29035"/>
    </cofactor>
    <cofactor evidence="1">
        <name>Mg(2+)</name>
        <dbReference type="ChEBI" id="CHEBI:18420"/>
    </cofactor>
    <text evidence="1">Manganese or magnesium. Binds 1 divalent metal ion per monomer in the absence of substrate. May bind a second metal ion after substrate binding.</text>
</comment>
<comment type="subcellular location">
    <subcellularLocation>
        <location evidence="1">Cytoplasm</location>
    </subcellularLocation>
</comment>
<comment type="similarity">
    <text evidence="1">Belongs to the RNase HII family.</text>
</comment>